<reference key="1">
    <citation type="journal article" date="2007" name="PLoS Genet.">
        <title>Patterns and implications of gene gain and loss in the evolution of Prochlorococcus.</title>
        <authorList>
            <person name="Kettler G.C."/>
            <person name="Martiny A.C."/>
            <person name="Huang K."/>
            <person name="Zucker J."/>
            <person name="Coleman M.L."/>
            <person name="Rodrigue S."/>
            <person name="Chen F."/>
            <person name="Lapidus A."/>
            <person name="Ferriera S."/>
            <person name="Johnson J."/>
            <person name="Steglich C."/>
            <person name="Church G.M."/>
            <person name="Richardson P."/>
            <person name="Chisholm S.W."/>
        </authorList>
    </citation>
    <scope>NUCLEOTIDE SEQUENCE [LARGE SCALE GENOMIC DNA]</scope>
    <source>
        <strain>AS9601</strain>
    </source>
</reference>
<sequence length="86" mass="9702">MPKSEIHPKWYPDAKVICNGEVVMTTGSTQPELHVDVWSGNHPFFTGTQKILDTEGRVDRFMKKYGMGSANSATSKEQKEEKDSKK</sequence>
<feature type="chain" id="PRO_1000126694" description="Large ribosomal subunit protein bL31">
    <location>
        <begin position="1"/>
        <end position="86"/>
    </location>
</feature>
<feature type="region of interest" description="Disordered" evidence="2">
    <location>
        <begin position="65"/>
        <end position="86"/>
    </location>
</feature>
<feature type="compositionally biased region" description="Basic and acidic residues" evidence="2">
    <location>
        <begin position="76"/>
        <end position="86"/>
    </location>
</feature>
<gene>
    <name evidence="1" type="primary">rpmE</name>
    <name evidence="1" type="synonym">rpl31</name>
    <name type="ordered locus">A9601_17381</name>
</gene>
<evidence type="ECO:0000255" key="1">
    <source>
        <dbReference type="HAMAP-Rule" id="MF_00501"/>
    </source>
</evidence>
<evidence type="ECO:0000256" key="2">
    <source>
        <dbReference type="SAM" id="MobiDB-lite"/>
    </source>
</evidence>
<evidence type="ECO:0000305" key="3"/>
<protein>
    <recommendedName>
        <fullName evidence="1">Large ribosomal subunit protein bL31</fullName>
    </recommendedName>
    <alternativeName>
        <fullName evidence="3">50S ribosomal protein L31</fullName>
    </alternativeName>
</protein>
<keyword id="KW-0687">Ribonucleoprotein</keyword>
<keyword id="KW-0689">Ribosomal protein</keyword>
<keyword id="KW-0694">RNA-binding</keyword>
<keyword id="KW-0699">rRNA-binding</keyword>
<organism>
    <name type="scientific">Prochlorococcus marinus (strain AS9601)</name>
    <dbReference type="NCBI Taxonomy" id="146891"/>
    <lineage>
        <taxon>Bacteria</taxon>
        <taxon>Bacillati</taxon>
        <taxon>Cyanobacteriota</taxon>
        <taxon>Cyanophyceae</taxon>
        <taxon>Synechococcales</taxon>
        <taxon>Prochlorococcaceae</taxon>
        <taxon>Prochlorococcus</taxon>
    </lineage>
</organism>
<dbReference type="EMBL" id="CP000551">
    <property type="protein sequence ID" value="ABM71021.1"/>
    <property type="molecule type" value="Genomic_DNA"/>
</dbReference>
<dbReference type="RefSeq" id="WP_011819146.1">
    <property type="nucleotide sequence ID" value="NC_008816.1"/>
</dbReference>
<dbReference type="STRING" id="146891.A9601_17381"/>
<dbReference type="KEGG" id="pmb:A9601_17381"/>
<dbReference type="eggNOG" id="COG0254">
    <property type="taxonomic scope" value="Bacteria"/>
</dbReference>
<dbReference type="HOGENOM" id="CLU_114306_1_2_3"/>
<dbReference type="OrthoDB" id="9803251at2"/>
<dbReference type="Proteomes" id="UP000002590">
    <property type="component" value="Chromosome"/>
</dbReference>
<dbReference type="GO" id="GO:1990904">
    <property type="term" value="C:ribonucleoprotein complex"/>
    <property type="evidence" value="ECO:0007669"/>
    <property type="project" value="UniProtKB-KW"/>
</dbReference>
<dbReference type="GO" id="GO:0005840">
    <property type="term" value="C:ribosome"/>
    <property type="evidence" value="ECO:0007669"/>
    <property type="project" value="UniProtKB-KW"/>
</dbReference>
<dbReference type="GO" id="GO:0019843">
    <property type="term" value="F:rRNA binding"/>
    <property type="evidence" value="ECO:0007669"/>
    <property type="project" value="UniProtKB-KW"/>
</dbReference>
<dbReference type="GO" id="GO:0003735">
    <property type="term" value="F:structural constituent of ribosome"/>
    <property type="evidence" value="ECO:0007669"/>
    <property type="project" value="InterPro"/>
</dbReference>
<dbReference type="GO" id="GO:0006412">
    <property type="term" value="P:translation"/>
    <property type="evidence" value="ECO:0007669"/>
    <property type="project" value="UniProtKB-UniRule"/>
</dbReference>
<dbReference type="Gene3D" id="4.10.830.30">
    <property type="entry name" value="Ribosomal protein L31"/>
    <property type="match status" value="1"/>
</dbReference>
<dbReference type="HAMAP" id="MF_00501">
    <property type="entry name" value="Ribosomal_bL31_1"/>
    <property type="match status" value="1"/>
</dbReference>
<dbReference type="InterPro" id="IPR034704">
    <property type="entry name" value="Ribosomal_bL28/bL31-like_sf"/>
</dbReference>
<dbReference type="InterPro" id="IPR002150">
    <property type="entry name" value="Ribosomal_bL31"/>
</dbReference>
<dbReference type="InterPro" id="IPR027491">
    <property type="entry name" value="Ribosomal_bL31_A"/>
</dbReference>
<dbReference type="InterPro" id="IPR042105">
    <property type="entry name" value="Ribosomal_bL31_sf"/>
</dbReference>
<dbReference type="NCBIfam" id="TIGR00105">
    <property type="entry name" value="L31"/>
    <property type="match status" value="1"/>
</dbReference>
<dbReference type="NCBIfam" id="NF000612">
    <property type="entry name" value="PRK00019.1"/>
    <property type="match status" value="1"/>
</dbReference>
<dbReference type="NCBIfam" id="NF001809">
    <property type="entry name" value="PRK00528.1"/>
    <property type="match status" value="1"/>
</dbReference>
<dbReference type="PANTHER" id="PTHR33280">
    <property type="entry name" value="50S RIBOSOMAL PROTEIN L31, CHLOROPLASTIC"/>
    <property type="match status" value="1"/>
</dbReference>
<dbReference type="PANTHER" id="PTHR33280:SF1">
    <property type="entry name" value="LARGE RIBOSOMAL SUBUNIT PROTEIN BL31C"/>
    <property type="match status" value="1"/>
</dbReference>
<dbReference type="Pfam" id="PF01197">
    <property type="entry name" value="Ribosomal_L31"/>
    <property type="match status" value="1"/>
</dbReference>
<dbReference type="PRINTS" id="PR01249">
    <property type="entry name" value="RIBOSOMALL31"/>
</dbReference>
<dbReference type="SUPFAM" id="SSF143800">
    <property type="entry name" value="L28p-like"/>
    <property type="match status" value="1"/>
</dbReference>
<dbReference type="PROSITE" id="PS01143">
    <property type="entry name" value="RIBOSOMAL_L31"/>
    <property type="match status" value="1"/>
</dbReference>
<name>RL31_PROMS</name>
<proteinExistence type="inferred from homology"/>
<accession>A2BTB0</accession>
<comment type="function">
    <text evidence="1">Binds the 23S rRNA.</text>
</comment>
<comment type="subunit">
    <text evidence="1">Part of the 50S ribosomal subunit.</text>
</comment>
<comment type="similarity">
    <text evidence="1">Belongs to the bacterial ribosomal protein bL31 family. Type A subfamily.</text>
</comment>